<protein>
    <recommendedName>
        <fullName>Deoxyhypusine synthase-like protein</fullName>
        <ecNumber>2.5.-.-</ecNumber>
    </recommendedName>
</protein>
<name>DHSL_NOSS1</name>
<sequence>MAKHLGKKIAPIPMSTDISVVDLIDNYFTAYNSARLREASQLLACDILKDGVTVGVSLSGAMTPAGFGVSALAPLIRNGFIDWMISTGANLYHDMHYGLGFELFAGNPFLDDVKLREEGTIRIYDIIFGYDVLLETDAFIRKILQAEPFQKRMGTAEFHYLLGKYVREVEKQLGVKHSCLLATAYEYGVPIYTSSPGDSSIGMNVAALALEGSQLILDPAIDVNETAAIAYNAREGEGKSAAVILGGGSPKNFLLQTQPQIHEVLGLEERGHDFFVQFTDARPDTGGLSGATPAEAVSWGKIDPDELPSTIVCYTDSTIALPLVTAYVLNQCPPRPLKRLYDRREELYDKLRTDYLAAKDKPVEKVATNGEVATYPCGTPIRQ</sequence>
<dbReference type="EC" id="2.5.-.-"/>
<dbReference type="EMBL" id="BA000019">
    <property type="protein sequence ID" value="BAB75503.1"/>
    <property type="molecule type" value="Genomic_DNA"/>
</dbReference>
<dbReference type="PIR" id="AE2281">
    <property type="entry name" value="AE2281"/>
</dbReference>
<dbReference type="RefSeq" id="WP_010997945.1">
    <property type="nucleotide sequence ID" value="NZ_RSCN01000011.1"/>
</dbReference>
<dbReference type="SMR" id="Q8YQL7"/>
<dbReference type="STRING" id="103690.gene:10495846"/>
<dbReference type="KEGG" id="ana:alr3804"/>
<dbReference type="eggNOG" id="COG1899">
    <property type="taxonomic scope" value="Bacteria"/>
</dbReference>
<dbReference type="OrthoDB" id="9771211at2"/>
<dbReference type="BRENDA" id="2.5.1.46">
    <property type="organism ID" value="8113"/>
</dbReference>
<dbReference type="Proteomes" id="UP000002483">
    <property type="component" value="Chromosome"/>
</dbReference>
<dbReference type="GO" id="GO:0005737">
    <property type="term" value="C:cytoplasm"/>
    <property type="evidence" value="ECO:0007669"/>
    <property type="project" value="TreeGrafter"/>
</dbReference>
<dbReference type="GO" id="GO:0034038">
    <property type="term" value="F:deoxyhypusine synthase activity"/>
    <property type="evidence" value="ECO:0007669"/>
    <property type="project" value="TreeGrafter"/>
</dbReference>
<dbReference type="Gene3D" id="3.40.910.10">
    <property type="entry name" value="Deoxyhypusine synthase"/>
    <property type="match status" value="1"/>
</dbReference>
<dbReference type="HAMAP" id="MF_00640">
    <property type="entry name" value="DHS_like"/>
    <property type="match status" value="1"/>
</dbReference>
<dbReference type="InterPro" id="IPR002773">
    <property type="entry name" value="Deoxyhypusine_synthase"/>
</dbReference>
<dbReference type="InterPro" id="IPR023496">
    <property type="entry name" value="Deoxyhypusine_synthase-like"/>
</dbReference>
<dbReference type="InterPro" id="IPR036982">
    <property type="entry name" value="Deoxyhypusine_synthase_sf"/>
</dbReference>
<dbReference type="InterPro" id="IPR029035">
    <property type="entry name" value="DHS-like_NAD/FAD-binding_dom"/>
</dbReference>
<dbReference type="NCBIfam" id="NF001980">
    <property type="entry name" value="PRK00770.1"/>
    <property type="match status" value="1"/>
</dbReference>
<dbReference type="PANTHER" id="PTHR11703">
    <property type="entry name" value="DEOXYHYPUSINE SYNTHASE"/>
    <property type="match status" value="1"/>
</dbReference>
<dbReference type="PANTHER" id="PTHR11703:SF2">
    <property type="entry name" value="DEOXYHYPUSINE SYNTHASE-LIKE PROTEIN"/>
    <property type="match status" value="1"/>
</dbReference>
<dbReference type="Pfam" id="PF01916">
    <property type="entry name" value="DS"/>
    <property type="match status" value="1"/>
</dbReference>
<dbReference type="SUPFAM" id="SSF52467">
    <property type="entry name" value="DHS-like NAD/FAD-binding domain"/>
    <property type="match status" value="1"/>
</dbReference>
<proteinExistence type="inferred from homology"/>
<gene>
    <name type="ordered locus">alr3804</name>
</gene>
<evidence type="ECO:0000305" key="1"/>
<feature type="chain" id="PRO_0000134512" description="Deoxyhypusine synthase-like protein">
    <location>
        <begin position="1"/>
        <end position="383"/>
    </location>
</feature>
<reference key="1">
    <citation type="journal article" date="2001" name="DNA Res.">
        <title>Complete genomic sequence of the filamentous nitrogen-fixing cyanobacterium Anabaena sp. strain PCC 7120.</title>
        <authorList>
            <person name="Kaneko T."/>
            <person name="Nakamura Y."/>
            <person name="Wolk C.P."/>
            <person name="Kuritz T."/>
            <person name="Sasamoto S."/>
            <person name="Watanabe A."/>
            <person name="Iriguchi M."/>
            <person name="Ishikawa A."/>
            <person name="Kawashima K."/>
            <person name="Kimura T."/>
            <person name="Kishida Y."/>
            <person name="Kohara M."/>
            <person name="Matsumoto M."/>
            <person name="Matsuno A."/>
            <person name="Muraki A."/>
            <person name="Nakazaki N."/>
            <person name="Shimpo S."/>
            <person name="Sugimoto M."/>
            <person name="Takazawa M."/>
            <person name="Yamada M."/>
            <person name="Yasuda M."/>
            <person name="Tabata S."/>
        </authorList>
    </citation>
    <scope>NUCLEOTIDE SEQUENCE [LARGE SCALE GENOMIC DNA]</scope>
    <source>
        <strain>PCC 7120 / SAG 25.82 / UTEX 2576</strain>
    </source>
</reference>
<comment type="similarity">
    <text evidence="1">Belongs to the deoxyhypusine synthase family.</text>
</comment>
<accession>Q8YQL7</accession>
<organism>
    <name type="scientific">Nostoc sp. (strain PCC 7120 / SAG 25.82 / UTEX 2576)</name>
    <dbReference type="NCBI Taxonomy" id="103690"/>
    <lineage>
        <taxon>Bacteria</taxon>
        <taxon>Bacillati</taxon>
        <taxon>Cyanobacteriota</taxon>
        <taxon>Cyanophyceae</taxon>
        <taxon>Nostocales</taxon>
        <taxon>Nostocaceae</taxon>
        <taxon>Nostoc</taxon>
    </lineage>
</organism>
<keyword id="KW-1185">Reference proteome</keyword>
<keyword id="KW-0808">Transferase</keyword>